<reference key="1">
    <citation type="submission" date="2009-05" db="EMBL/GenBank/DDBJ databases">
        <title>Complete sequence of Tolumonas auensis DSM 9187.</title>
        <authorList>
            <consortium name="US DOE Joint Genome Institute"/>
            <person name="Lucas S."/>
            <person name="Copeland A."/>
            <person name="Lapidus A."/>
            <person name="Glavina del Rio T."/>
            <person name="Tice H."/>
            <person name="Bruce D."/>
            <person name="Goodwin L."/>
            <person name="Pitluck S."/>
            <person name="Chertkov O."/>
            <person name="Brettin T."/>
            <person name="Detter J.C."/>
            <person name="Han C."/>
            <person name="Larimer F."/>
            <person name="Land M."/>
            <person name="Hauser L."/>
            <person name="Kyrpides N."/>
            <person name="Mikhailova N."/>
            <person name="Spring S."/>
            <person name="Beller H."/>
        </authorList>
    </citation>
    <scope>NUCLEOTIDE SEQUENCE [LARGE SCALE GENOMIC DNA]</scope>
    <source>
        <strain>DSM 9187 / NBRC 110442 / TA 4</strain>
    </source>
</reference>
<sequence>MKVIEGVIPAPQAKIAIVVSRFNSFINDRLVEGALDTLKRQGQIADENITLVKVPGAVELPLAAKRLAKSKQFDGIVALGCVIRGGTAHFEYVSGECAKGLAQVALEAEIPVAFGVLTTENIEQAIERAGTKAGNKGVEAALSTLEMINVMNALGA</sequence>
<keyword id="KW-1185">Reference proteome</keyword>
<keyword id="KW-0686">Riboflavin biosynthesis</keyword>
<keyword id="KW-0808">Transferase</keyword>
<proteinExistence type="inferred from homology"/>
<feature type="chain" id="PRO_1000203808" description="6,7-dimethyl-8-ribityllumazine synthase">
    <location>
        <begin position="1"/>
        <end position="156"/>
    </location>
</feature>
<feature type="active site" description="Proton donor" evidence="1">
    <location>
        <position position="89"/>
    </location>
</feature>
<feature type="binding site" evidence="1">
    <location>
        <position position="22"/>
    </location>
    <ligand>
        <name>5-amino-6-(D-ribitylamino)uracil</name>
        <dbReference type="ChEBI" id="CHEBI:15934"/>
    </ligand>
</feature>
<feature type="binding site" evidence="1">
    <location>
        <begin position="57"/>
        <end position="59"/>
    </location>
    <ligand>
        <name>5-amino-6-(D-ribitylamino)uracil</name>
        <dbReference type="ChEBI" id="CHEBI:15934"/>
    </ligand>
</feature>
<feature type="binding site" evidence="1">
    <location>
        <begin position="81"/>
        <end position="83"/>
    </location>
    <ligand>
        <name>5-amino-6-(D-ribitylamino)uracil</name>
        <dbReference type="ChEBI" id="CHEBI:15934"/>
    </ligand>
</feature>
<feature type="binding site" evidence="1">
    <location>
        <begin position="86"/>
        <end position="87"/>
    </location>
    <ligand>
        <name>(2S)-2-hydroxy-3-oxobutyl phosphate</name>
        <dbReference type="ChEBI" id="CHEBI:58830"/>
    </ligand>
</feature>
<feature type="binding site" evidence="1">
    <location>
        <position position="114"/>
    </location>
    <ligand>
        <name>5-amino-6-(D-ribitylamino)uracil</name>
        <dbReference type="ChEBI" id="CHEBI:15934"/>
    </ligand>
</feature>
<feature type="binding site" evidence="1">
    <location>
        <position position="128"/>
    </location>
    <ligand>
        <name>(2S)-2-hydroxy-3-oxobutyl phosphate</name>
        <dbReference type="ChEBI" id="CHEBI:58830"/>
    </ligand>
</feature>
<protein>
    <recommendedName>
        <fullName evidence="1">6,7-dimethyl-8-ribityllumazine synthase</fullName>
        <shortName evidence="1">DMRL synthase</shortName>
        <shortName evidence="1">LS</shortName>
        <shortName evidence="1">Lumazine synthase</shortName>
        <ecNumber evidence="1">2.5.1.78</ecNumber>
    </recommendedName>
</protein>
<organism>
    <name type="scientific">Tolumonas auensis (strain DSM 9187 / NBRC 110442 / TA 4)</name>
    <dbReference type="NCBI Taxonomy" id="595494"/>
    <lineage>
        <taxon>Bacteria</taxon>
        <taxon>Pseudomonadati</taxon>
        <taxon>Pseudomonadota</taxon>
        <taxon>Gammaproteobacteria</taxon>
        <taxon>Aeromonadales</taxon>
        <taxon>Aeromonadaceae</taxon>
        <taxon>Tolumonas</taxon>
    </lineage>
</organism>
<evidence type="ECO:0000255" key="1">
    <source>
        <dbReference type="HAMAP-Rule" id="MF_00178"/>
    </source>
</evidence>
<name>RISB_TOLAT</name>
<gene>
    <name evidence="1" type="primary">ribH</name>
    <name type="ordered locus">Tola_2522</name>
</gene>
<comment type="function">
    <text evidence="1">Catalyzes the formation of 6,7-dimethyl-8-ribityllumazine by condensation of 5-amino-6-(D-ribitylamino)uracil with 3,4-dihydroxy-2-butanone 4-phosphate. This is the penultimate step in the biosynthesis of riboflavin.</text>
</comment>
<comment type="catalytic activity">
    <reaction evidence="1">
        <text>(2S)-2-hydroxy-3-oxobutyl phosphate + 5-amino-6-(D-ribitylamino)uracil = 6,7-dimethyl-8-(1-D-ribityl)lumazine + phosphate + 2 H2O + H(+)</text>
        <dbReference type="Rhea" id="RHEA:26152"/>
        <dbReference type="ChEBI" id="CHEBI:15377"/>
        <dbReference type="ChEBI" id="CHEBI:15378"/>
        <dbReference type="ChEBI" id="CHEBI:15934"/>
        <dbReference type="ChEBI" id="CHEBI:43474"/>
        <dbReference type="ChEBI" id="CHEBI:58201"/>
        <dbReference type="ChEBI" id="CHEBI:58830"/>
        <dbReference type="EC" id="2.5.1.78"/>
    </reaction>
</comment>
<comment type="pathway">
    <text evidence="1">Cofactor biosynthesis; riboflavin biosynthesis; riboflavin from 2-hydroxy-3-oxobutyl phosphate and 5-amino-6-(D-ribitylamino)uracil: step 1/2.</text>
</comment>
<comment type="subunit">
    <text evidence="1">Forms an icosahedral capsid composed of 60 subunits, arranged as a dodecamer of pentamers.</text>
</comment>
<comment type="similarity">
    <text evidence="1">Belongs to the DMRL synthase family.</text>
</comment>
<accession>C4LAE1</accession>
<dbReference type="EC" id="2.5.1.78" evidence="1"/>
<dbReference type="EMBL" id="CP001616">
    <property type="protein sequence ID" value="ACQ94116.1"/>
    <property type="molecule type" value="Genomic_DNA"/>
</dbReference>
<dbReference type="SMR" id="C4LAE1"/>
<dbReference type="STRING" id="595494.Tola_2522"/>
<dbReference type="KEGG" id="tau:Tola_2522"/>
<dbReference type="eggNOG" id="COG0054">
    <property type="taxonomic scope" value="Bacteria"/>
</dbReference>
<dbReference type="HOGENOM" id="CLU_089358_1_1_6"/>
<dbReference type="OrthoDB" id="9809709at2"/>
<dbReference type="UniPathway" id="UPA00275">
    <property type="reaction ID" value="UER00404"/>
</dbReference>
<dbReference type="Proteomes" id="UP000009073">
    <property type="component" value="Chromosome"/>
</dbReference>
<dbReference type="GO" id="GO:0005829">
    <property type="term" value="C:cytosol"/>
    <property type="evidence" value="ECO:0007669"/>
    <property type="project" value="TreeGrafter"/>
</dbReference>
<dbReference type="GO" id="GO:0009349">
    <property type="term" value="C:riboflavin synthase complex"/>
    <property type="evidence" value="ECO:0007669"/>
    <property type="project" value="InterPro"/>
</dbReference>
<dbReference type="GO" id="GO:0000906">
    <property type="term" value="F:6,7-dimethyl-8-ribityllumazine synthase activity"/>
    <property type="evidence" value="ECO:0007669"/>
    <property type="project" value="UniProtKB-UniRule"/>
</dbReference>
<dbReference type="GO" id="GO:0009231">
    <property type="term" value="P:riboflavin biosynthetic process"/>
    <property type="evidence" value="ECO:0007669"/>
    <property type="project" value="UniProtKB-UniRule"/>
</dbReference>
<dbReference type="CDD" id="cd09209">
    <property type="entry name" value="Lumazine_synthase-I"/>
    <property type="match status" value="1"/>
</dbReference>
<dbReference type="FunFam" id="3.40.50.960:FF:000001">
    <property type="entry name" value="6,7-dimethyl-8-ribityllumazine synthase"/>
    <property type="match status" value="1"/>
</dbReference>
<dbReference type="Gene3D" id="3.40.50.960">
    <property type="entry name" value="Lumazine/riboflavin synthase"/>
    <property type="match status" value="1"/>
</dbReference>
<dbReference type="HAMAP" id="MF_00178">
    <property type="entry name" value="Lumazine_synth"/>
    <property type="match status" value="1"/>
</dbReference>
<dbReference type="InterPro" id="IPR034964">
    <property type="entry name" value="LS"/>
</dbReference>
<dbReference type="InterPro" id="IPR002180">
    <property type="entry name" value="LS/RS"/>
</dbReference>
<dbReference type="InterPro" id="IPR036467">
    <property type="entry name" value="LS/RS_sf"/>
</dbReference>
<dbReference type="NCBIfam" id="TIGR00114">
    <property type="entry name" value="lumazine-synth"/>
    <property type="match status" value="1"/>
</dbReference>
<dbReference type="NCBIfam" id="NF000812">
    <property type="entry name" value="PRK00061.1-4"/>
    <property type="match status" value="1"/>
</dbReference>
<dbReference type="PANTHER" id="PTHR21058:SF0">
    <property type="entry name" value="6,7-DIMETHYL-8-RIBITYLLUMAZINE SYNTHASE"/>
    <property type="match status" value="1"/>
</dbReference>
<dbReference type="PANTHER" id="PTHR21058">
    <property type="entry name" value="6,7-DIMETHYL-8-RIBITYLLUMAZINE SYNTHASE DMRL SYNTHASE LUMAZINE SYNTHASE"/>
    <property type="match status" value="1"/>
</dbReference>
<dbReference type="Pfam" id="PF00885">
    <property type="entry name" value="DMRL_synthase"/>
    <property type="match status" value="1"/>
</dbReference>
<dbReference type="SUPFAM" id="SSF52121">
    <property type="entry name" value="Lumazine synthase"/>
    <property type="match status" value="1"/>
</dbReference>